<reference key="1">
    <citation type="journal article" date="2005" name="J. Cell. Biochem.">
        <title>Bone morphogenetic protein-2 induces expression of murine zinc finger transcription factor ZNF450.</title>
        <authorList>
            <person name="Edgar A.J."/>
            <person name="Dover S.L."/>
            <person name="Lodrick M.N."/>
            <person name="McKay I.J."/>
            <person name="Hughes F.J."/>
            <person name="Turner W."/>
        </authorList>
    </citation>
    <scope>NUCLEOTIDE SEQUENCE [MRNA] (ISOFORMS 1 AND 3)</scope>
    <scope>TISSUE SPECIFICITY</scope>
    <scope>INDUCTION</scope>
</reference>
<reference key="2">
    <citation type="submission" date="2003-01" db="EMBL/GenBank/DDBJ databases">
        <title>Cloning and characterization of a novel mouse gene BSG1 cDNA specifically expressed in brain and hippocampus.</title>
        <authorList>
            <person name="Chen W."/>
            <person name="Ci H."/>
            <person name="Wu T."/>
            <person name="Liang Y."/>
            <person name="Shimizu K."/>
            <person name="Li Y.-P."/>
        </authorList>
    </citation>
    <scope>NUCLEOTIDE SEQUENCE [GENOMIC DNA / MRNA] (ISOFORM 1)</scope>
    <source>
        <strain>C57BL/6J</strain>
    </source>
</reference>
<reference key="3">
    <citation type="journal article" date="2005" name="Science">
        <title>The transcriptional landscape of the mammalian genome.</title>
        <authorList>
            <person name="Carninci P."/>
            <person name="Kasukawa T."/>
            <person name="Katayama S."/>
            <person name="Gough J."/>
            <person name="Frith M.C."/>
            <person name="Maeda N."/>
            <person name="Oyama R."/>
            <person name="Ravasi T."/>
            <person name="Lenhard B."/>
            <person name="Wells C."/>
            <person name="Kodzius R."/>
            <person name="Shimokawa K."/>
            <person name="Bajic V.B."/>
            <person name="Brenner S.E."/>
            <person name="Batalov S."/>
            <person name="Forrest A.R."/>
            <person name="Zavolan M."/>
            <person name="Davis M.J."/>
            <person name="Wilming L.G."/>
            <person name="Aidinis V."/>
            <person name="Allen J.E."/>
            <person name="Ambesi-Impiombato A."/>
            <person name="Apweiler R."/>
            <person name="Aturaliya R.N."/>
            <person name="Bailey T.L."/>
            <person name="Bansal M."/>
            <person name="Baxter L."/>
            <person name="Beisel K.W."/>
            <person name="Bersano T."/>
            <person name="Bono H."/>
            <person name="Chalk A.M."/>
            <person name="Chiu K.P."/>
            <person name="Choudhary V."/>
            <person name="Christoffels A."/>
            <person name="Clutterbuck D.R."/>
            <person name="Crowe M.L."/>
            <person name="Dalla E."/>
            <person name="Dalrymple B.P."/>
            <person name="de Bono B."/>
            <person name="Della Gatta G."/>
            <person name="di Bernardo D."/>
            <person name="Down T."/>
            <person name="Engstrom P."/>
            <person name="Fagiolini M."/>
            <person name="Faulkner G."/>
            <person name="Fletcher C.F."/>
            <person name="Fukushima T."/>
            <person name="Furuno M."/>
            <person name="Futaki S."/>
            <person name="Gariboldi M."/>
            <person name="Georgii-Hemming P."/>
            <person name="Gingeras T.R."/>
            <person name="Gojobori T."/>
            <person name="Green R.E."/>
            <person name="Gustincich S."/>
            <person name="Harbers M."/>
            <person name="Hayashi Y."/>
            <person name="Hensch T.K."/>
            <person name="Hirokawa N."/>
            <person name="Hill D."/>
            <person name="Huminiecki L."/>
            <person name="Iacono M."/>
            <person name="Ikeo K."/>
            <person name="Iwama A."/>
            <person name="Ishikawa T."/>
            <person name="Jakt M."/>
            <person name="Kanapin A."/>
            <person name="Katoh M."/>
            <person name="Kawasawa Y."/>
            <person name="Kelso J."/>
            <person name="Kitamura H."/>
            <person name="Kitano H."/>
            <person name="Kollias G."/>
            <person name="Krishnan S.P."/>
            <person name="Kruger A."/>
            <person name="Kummerfeld S.K."/>
            <person name="Kurochkin I.V."/>
            <person name="Lareau L.F."/>
            <person name="Lazarevic D."/>
            <person name="Lipovich L."/>
            <person name="Liu J."/>
            <person name="Liuni S."/>
            <person name="McWilliam S."/>
            <person name="Madan Babu M."/>
            <person name="Madera M."/>
            <person name="Marchionni L."/>
            <person name="Matsuda H."/>
            <person name="Matsuzawa S."/>
            <person name="Miki H."/>
            <person name="Mignone F."/>
            <person name="Miyake S."/>
            <person name="Morris K."/>
            <person name="Mottagui-Tabar S."/>
            <person name="Mulder N."/>
            <person name="Nakano N."/>
            <person name="Nakauchi H."/>
            <person name="Ng P."/>
            <person name="Nilsson R."/>
            <person name="Nishiguchi S."/>
            <person name="Nishikawa S."/>
            <person name="Nori F."/>
            <person name="Ohara O."/>
            <person name="Okazaki Y."/>
            <person name="Orlando V."/>
            <person name="Pang K.C."/>
            <person name="Pavan W.J."/>
            <person name="Pavesi G."/>
            <person name="Pesole G."/>
            <person name="Petrovsky N."/>
            <person name="Piazza S."/>
            <person name="Reed J."/>
            <person name="Reid J.F."/>
            <person name="Ring B.Z."/>
            <person name="Ringwald M."/>
            <person name="Rost B."/>
            <person name="Ruan Y."/>
            <person name="Salzberg S.L."/>
            <person name="Sandelin A."/>
            <person name="Schneider C."/>
            <person name="Schoenbach C."/>
            <person name="Sekiguchi K."/>
            <person name="Semple C.A."/>
            <person name="Seno S."/>
            <person name="Sessa L."/>
            <person name="Sheng Y."/>
            <person name="Shibata Y."/>
            <person name="Shimada H."/>
            <person name="Shimada K."/>
            <person name="Silva D."/>
            <person name="Sinclair B."/>
            <person name="Sperling S."/>
            <person name="Stupka E."/>
            <person name="Sugiura K."/>
            <person name="Sultana R."/>
            <person name="Takenaka Y."/>
            <person name="Taki K."/>
            <person name="Tammoja K."/>
            <person name="Tan S.L."/>
            <person name="Tang S."/>
            <person name="Taylor M.S."/>
            <person name="Tegner J."/>
            <person name="Teichmann S.A."/>
            <person name="Ueda H.R."/>
            <person name="van Nimwegen E."/>
            <person name="Verardo R."/>
            <person name="Wei C.L."/>
            <person name="Yagi K."/>
            <person name="Yamanishi H."/>
            <person name="Zabarovsky E."/>
            <person name="Zhu S."/>
            <person name="Zimmer A."/>
            <person name="Hide W."/>
            <person name="Bult C."/>
            <person name="Grimmond S.M."/>
            <person name="Teasdale R.D."/>
            <person name="Liu E.T."/>
            <person name="Brusic V."/>
            <person name="Quackenbush J."/>
            <person name="Wahlestedt C."/>
            <person name="Mattick J.S."/>
            <person name="Hume D.A."/>
            <person name="Kai C."/>
            <person name="Sasaki D."/>
            <person name="Tomaru Y."/>
            <person name="Fukuda S."/>
            <person name="Kanamori-Katayama M."/>
            <person name="Suzuki M."/>
            <person name="Aoki J."/>
            <person name="Arakawa T."/>
            <person name="Iida J."/>
            <person name="Imamura K."/>
            <person name="Itoh M."/>
            <person name="Kato T."/>
            <person name="Kawaji H."/>
            <person name="Kawagashira N."/>
            <person name="Kawashima T."/>
            <person name="Kojima M."/>
            <person name="Kondo S."/>
            <person name="Konno H."/>
            <person name="Nakano K."/>
            <person name="Ninomiya N."/>
            <person name="Nishio T."/>
            <person name="Okada M."/>
            <person name="Plessy C."/>
            <person name="Shibata K."/>
            <person name="Shiraki T."/>
            <person name="Suzuki S."/>
            <person name="Tagami M."/>
            <person name="Waki K."/>
            <person name="Watahiki A."/>
            <person name="Okamura-Oho Y."/>
            <person name="Suzuki H."/>
            <person name="Kawai J."/>
            <person name="Hayashizaki Y."/>
        </authorList>
    </citation>
    <scope>NUCLEOTIDE SEQUENCE [LARGE SCALE MRNA] (ISOFORM 1)</scope>
    <source>
        <strain>C57BL/6J</strain>
        <tissue>Amnion</tissue>
        <tissue>Oviduct</tissue>
    </source>
</reference>
<reference key="4">
    <citation type="journal article" date="2004" name="Genome Res.">
        <title>The status, quality, and expansion of the NIH full-length cDNA project: the Mammalian Gene Collection (MGC).</title>
        <authorList>
            <consortium name="The MGC Project Team"/>
        </authorList>
    </citation>
    <scope>NUCLEOTIDE SEQUENCE [LARGE SCALE MRNA] (ISOFORMS 1 AND 2)</scope>
    <source>
        <strain>C3H/He</strain>
        <strain>C57BL/6J</strain>
        <tissue>Brain</tissue>
        <tissue>Osteoblast</tissue>
    </source>
</reference>
<reference key="5">
    <citation type="submission" date="2007-04" db="UniProtKB">
        <authorList>
            <person name="Lubec G."/>
            <person name="Kang S.U."/>
        </authorList>
    </citation>
    <scope>PROTEIN SEQUENCE OF 441-453 AND 506-515</scope>
    <scope>IDENTIFICATION BY MASS SPECTROMETRY</scope>
    <source>
        <strain>C57BL/6J</strain>
        <tissue>Brain</tissue>
    </source>
</reference>
<sequence length="710" mass="78751">MADTTPEPCGQLMVHSDTHSDTVLASLEDQRKKGFLCDITLIVENVHFRAHKALLAASSEYFSMMFAEEGEIGQSIYMLEGMVADTFGILLEFIYTGYLHASEKTTEQILATAQFLKVYDLVKAYADFQDNHSAPKPPALNCTGTPVVVISNKKNDPLKRKRGRPRKANGLQEGRSELAAEGELQLRVNNSVQNRQNFVFKEEDSVKLSEQTPEDKESEPAGEPGSVEEVPAEKDENFDPKAGDGQESQSRCSRRRIRRSVKLKDYKLLGDEDDQSTAKRLCGRKKRSSGPEARCKDCDRVFKYSHFLAIHQRRHTGERPFKCNECGKGFAQKHSLQVHTRMHTGERPYTCTVCGKALTTKHSLLEHMSLHSGQKSFTCDQCGKYFSQKRQLKSHYRVHTGHSLPECSHCHRKFMDVSQLKKHLRTHTGEKPFTCEICGKSFTAKSSLQTHIRIHRGEKPYSCSICGKCFSDSSAKRRHCILHTGKKPFSCPECGLQFARLDNLKAHLKIHSKEKHTADSSSVSGSNVDEGRNILQLQPYQLSTSGEQEIQLLVTDSVHNINFMPGPSQGVSIVAAESPQSMATDPAANITLLTQQPEQLQGLILSAQQEQAEHIQSLSVIGGQMESSQTEPVHVITLSKETLEHLHAHQEQTTSSVPAADTGARATPVPSTRPGAELTQAPLAVPLDPSPGATVAGWPFGPSSYRSLKM</sequence>
<keyword id="KW-0002">3D-structure</keyword>
<keyword id="KW-0025">Alternative splicing</keyword>
<keyword id="KW-0903">Direct protein sequencing</keyword>
<keyword id="KW-0238">DNA-binding</keyword>
<keyword id="KW-0479">Metal-binding</keyword>
<keyword id="KW-0539">Nucleus</keyword>
<keyword id="KW-1185">Reference proteome</keyword>
<keyword id="KW-0677">Repeat</keyword>
<keyword id="KW-0804">Transcription</keyword>
<keyword id="KW-0805">Transcription regulation</keyword>
<keyword id="KW-0862">Zinc</keyword>
<keyword id="KW-0863">Zinc-finger</keyword>
<evidence type="ECO:0000250" key="1">
    <source>
        <dbReference type="UniProtKB" id="O43167"/>
    </source>
</evidence>
<evidence type="ECO:0000255" key="2">
    <source>
        <dbReference type="PROSITE-ProRule" id="PRU00037"/>
    </source>
</evidence>
<evidence type="ECO:0000255" key="3">
    <source>
        <dbReference type="PROSITE-ProRule" id="PRU00042"/>
    </source>
</evidence>
<evidence type="ECO:0000256" key="4">
    <source>
        <dbReference type="SAM" id="MobiDB-lite"/>
    </source>
</evidence>
<evidence type="ECO:0000269" key="5">
    <source>
    </source>
</evidence>
<evidence type="ECO:0000303" key="6">
    <source>
    </source>
</evidence>
<evidence type="ECO:0000303" key="7">
    <source>
    </source>
</evidence>
<evidence type="ECO:0000305" key="8"/>
<evidence type="ECO:0007829" key="9">
    <source>
        <dbReference type="PDB" id="6ML4"/>
    </source>
</evidence>
<accession>Q80X44</accession>
<accession>Q3UIB7</accession>
<accession>Q7TPC4</accession>
<accession>Q8CJC9</accession>
<gene>
    <name type="primary">Zbtb24</name>
    <name type="synonym">Bif1</name>
    <name type="synonym">Bsg1</name>
    <name type="synonym">Znf450</name>
</gene>
<proteinExistence type="evidence at protein level"/>
<dbReference type="EMBL" id="AF263010">
    <property type="protein sequence ID" value="AAK91811.2"/>
    <property type="molecule type" value="mRNA"/>
</dbReference>
<dbReference type="EMBL" id="AY210402">
    <property type="protein sequence ID" value="AAO42998.1"/>
    <property type="molecule type" value="mRNA"/>
</dbReference>
<dbReference type="EMBL" id="AY210403">
    <property type="protein sequence ID" value="AAO42999.1"/>
    <property type="molecule type" value="Genomic_DNA"/>
</dbReference>
<dbReference type="EMBL" id="AK054097">
    <property type="protein sequence ID" value="BAE20695.1"/>
    <property type="molecule type" value="mRNA"/>
</dbReference>
<dbReference type="EMBL" id="AK146986">
    <property type="protein sequence ID" value="BAE27589.1"/>
    <property type="molecule type" value="mRNA"/>
</dbReference>
<dbReference type="EMBL" id="BC050933">
    <property type="protein sequence ID" value="AAH50933.1"/>
    <property type="molecule type" value="mRNA"/>
</dbReference>
<dbReference type="EMBL" id="BC055367">
    <property type="protein sequence ID" value="AAH55367.1"/>
    <property type="molecule type" value="mRNA"/>
</dbReference>
<dbReference type="CCDS" id="CCDS23804.1">
    <molecule id="Q80X44-1"/>
</dbReference>
<dbReference type="CCDS" id="CCDS87996.1">
    <molecule id="Q80X44-2"/>
</dbReference>
<dbReference type="CCDS" id="CCDS87997.1">
    <molecule id="Q80X44-3"/>
</dbReference>
<dbReference type="RefSeq" id="NP_001264158.1">
    <molecule id="Q80X44-2"/>
    <property type="nucleotide sequence ID" value="NM_001277229.1"/>
</dbReference>
<dbReference type="RefSeq" id="NP_001264159.1">
    <molecule id="Q80X44-3"/>
    <property type="nucleotide sequence ID" value="NM_001277230.1"/>
</dbReference>
<dbReference type="RefSeq" id="NP_700447.2">
    <molecule id="Q80X44-1"/>
    <property type="nucleotide sequence ID" value="NM_153398.3"/>
</dbReference>
<dbReference type="PDB" id="6ML2">
    <property type="method" value="X-ray"/>
    <property type="resolution" value="1.87 A"/>
    <property type="chains" value="A=375-519"/>
</dbReference>
<dbReference type="PDB" id="6ML3">
    <property type="method" value="X-ray"/>
    <property type="resolution" value="1.68 A"/>
    <property type="chains" value="A=375-519"/>
</dbReference>
<dbReference type="PDB" id="6ML4">
    <property type="method" value="X-ray"/>
    <property type="resolution" value="1.48 A"/>
    <property type="chains" value="A=375-519"/>
</dbReference>
<dbReference type="PDB" id="6ML5">
    <property type="method" value="X-ray"/>
    <property type="resolution" value="1.65 A"/>
    <property type="chains" value="A=375-519"/>
</dbReference>
<dbReference type="PDB" id="6ML6">
    <property type="method" value="X-ray"/>
    <property type="resolution" value="1.54 A"/>
    <property type="chains" value="A=375-519"/>
</dbReference>
<dbReference type="PDB" id="6ML7">
    <property type="method" value="X-ray"/>
    <property type="resolution" value="1.75 A"/>
    <property type="chains" value="A=375-519"/>
</dbReference>
<dbReference type="PDBsum" id="6ML2"/>
<dbReference type="PDBsum" id="6ML3"/>
<dbReference type="PDBsum" id="6ML4"/>
<dbReference type="PDBsum" id="6ML5"/>
<dbReference type="PDBsum" id="6ML6"/>
<dbReference type="PDBsum" id="6ML7"/>
<dbReference type="SMR" id="Q80X44"/>
<dbReference type="BioGRID" id="234478">
    <property type="interactions" value="2"/>
</dbReference>
<dbReference type="FunCoup" id="Q80X44">
    <property type="interactions" value="1916"/>
</dbReference>
<dbReference type="IntAct" id="Q80X44">
    <property type="interactions" value="2"/>
</dbReference>
<dbReference type="MINT" id="Q80X44"/>
<dbReference type="STRING" id="10090.ENSMUSP00000079592"/>
<dbReference type="iPTMnet" id="Q80X44"/>
<dbReference type="PhosphoSitePlus" id="Q80X44"/>
<dbReference type="PaxDb" id="10090-ENSMUSP00000079592"/>
<dbReference type="ProteomicsDB" id="275124">
    <molecule id="Q80X44-1"/>
</dbReference>
<dbReference type="ProteomicsDB" id="275125">
    <molecule id="Q80X44-2"/>
</dbReference>
<dbReference type="ProteomicsDB" id="275126">
    <molecule id="Q80X44-3"/>
</dbReference>
<dbReference type="Antibodypedia" id="56124">
    <property type="antibodies" value="118 antibodies from 24 providers"/>
</dbReference>
<dbReference type="DNASU" id="268294"/>
<dbReference type="Ensembl" id="ENSMUST00000080771.10">
    <molecule id="Q80X44-1"/>
    <property type="protein sequence ID" value="ENSMUSP00000079592.9"/>
    <property type="gene ID" value="ENSMUSG00000019826.12"/>
</dbReference>
<dbReference type="Ensembl" id="ENSMUST00000213797.2">
    <molecule id="Q80X44-2"/>
    <property type="protein sequence ID" value="ENSMUSP00000148861.2"/>
    <property type="gene ID" value="ENSMUSG00000019826.12"/>
</dbReference>
<dbReference type="Ensembl" id="ENSMUST00000216656.2">
    <molecule id="Q80X44-3"/>
    <property type="protein sequence ID" value="ENSMUSP00000150197.2"/>
    <property type="gene ID" value="ENSMUSG00000019826.12"/>
</dbReference>
<dbReference type="GeneID" id="268294"/>
<dbReference type="KEGG" id="mmu:268294"/>
<dbReference type="UCSC" id="uc007exl.2">
    <molecule id="Q80X44-3"/>
    <property type="organism name" value="mouse"/>
</dbReference>
<dbReference type="UCSC" id="uc007exm.2">
    <molecule id="Q80X44-1"/>
    <property type="organism name" value="mouse"/>
</dbReference>
<dbReference type="UCSC" id="uc011xdb.2">
    <molecule id="Q80X44-2"/>
    <property type="organism name" value="mouse"/>
</dbReference>
<dbReference type="AGR" id="MGI:3039618"/>
<dbReference type="CTD" id="9841"/>
<dbReference type="MGI" id="MGI:3039618">
    <property type="gene designation" value="Zbtb24"/>
</dbReference>
<dbReference type="VEuPathDB" id="HostDB:ENSMUSG00000019826"/>
<dbReference type="eggNOG" id="KOG1721">
    <property type="taxonomic scope" value="Eukaryota"/>
</dbReference>
<dbReference type="GeneTree" id="ENSGT00940000159373"/>
<dbReference type="HOGENOM" id="CLU_024445_0_0_1"/>
<dbReference type="InParanoid" id="Q80X44"/>
<dbReference type="OMA" id="SNHHIQG"/>
<dbReference type="OrthoDB" id="6365676at2759"/>
<dbReference type="PhylomeDB" id="Q80X44"/>
<dbReference type="TreeFam" id="TF332049"/>
<dbReference type="BioGRID-ORCS" id="268294">
    <property type="hits" value="6 hits in 75 CRISPR screens"/>
</dbReference>
<dbReference type="ChiTaRS" id="Zbtb24">
    <property type="organism name" value="mouse"/>
</dbReference>
<dbReference type="PRO" id="PR:Q80X44"/>
<dbReference type="Proteomes" id="UP000000589">
    <property type="component" value="Chromosome 10"/>
</dbReference>
<dbReference type="RNAct" id="Q80X44">
    <property type="molecule type" value="protein"/>
</dbReference>
<dbReference type="Bgee" id="ENSMUSG00000019826">
    <property type="expression patterns" value="Expressed in granulocyte and 226 other cell types or tissues"/>
</dbReference>
<dbReference type="GO" id="GO:0005634">
    <property type="term" value="C:nucleus"/>
    <property type="evidence" value="ECO:0007669"/>
    <property type="project" value="UniProtKB-SubCell"/>
</dbReference>
<dbReference type="GO" id="GO:0003677">
    <property type="term" value="F:DNA binding"/>
    <property type="evidence" value="ECO:0007669"/>
    <property type="project" value="UniProtKB-KW"/>
</dbReference>
<dbReference type="GO" id="GO:0003700">
    <property type="term" value="F:DNA-binding transcription factor activity"/>
    <property type="evidence" value="ECO:0000303"/>
    <property type="project" value="UniProtKB"/>
</dbReference>
<dbReference type="GO" id="GO:0008270">
    <property type="term" value="F:zinc ion binding"/>
    <property type="evidence" value="ECO:0007669"/>
    <property type="project" value="UniProtKB-KW"/>
</dbReference>
<dbReference type="GO" id="GO:0002244">
    <property type="term" value="P:hematopoietic progenitor cell differentiation"/>
    <property type="evidence" value="ECO:0000315"/>
    <property type="project" value="MGI"/>
</dbReference>
<dbReference type="GO" id="GO:0006355">
    <property type="term" value="P:regulation of DNA-templated transcription"/>
    <property type="evidence" value="ECO:0000303"/>
    <property type="project" value="UniProtKB"/>
</dbReference>
<dbReference type="CDD" id="cd18212">
    <property type="entry name" value="BTB_POZ_ZBTB24_ZNF450"/>
    <property type="match status" value="1"/>
</dbReference>
<dbReference type="FunFam" id="3.30.160.60:FF:000472">
    <property type="entry name" value="myoneurin isoform X1"/>
    <property type="match status" value="1"/>
</dbReference>
<dbReference type="FunFam" id="3.30.160.60:FF:001480">
    <property type="entry name" value="Si:cabz01071911.3"/>
    <property type="match status" value="1"/>
</dbReference>
<dbReference type="FunFam" id="3.30.160.60:FF:000692">
    <property type="entry name" value="Zinc finger and BTB domain containing 24"/>
    <property type="match status" value="1"/>
</dbReference>
<dbReference type="FunFam" id="3.30.160.60:FF:000267">
    <property type="entry name" value="Zinc finger and BTB domain-containing 49"/>
    <property type="match status" value="1"/>
</dbReference>
<dbReference type="FunFam" id="3.30.710.10:FF:000082">
    <property type="entry name" value="zinc finger and BTB domain-containing protein 24 isoform X1"/>
    <property type="match status" value="1"/>
</dbReference>
<dbReference type="FunFam" id="3.30.160.60:FF:001506">
    <property type="entry name" value="Zinc finger protein"/>
    <property type="match status" value="1"/>
</dbReference>
<dbReference type="FunFam" id="3.30.160.60:FF:002343">
    <property type="entry name" value="Zinc finger protein 33A"/>
    <property type="match status" value="1"/>
</dbReference>
<dbReference type="FunFam" id="3.30.160.60:FF:000624">
    <property type="entry name" value="zinc finger protein 697"/>
    <property type="match status" value="1"/>
</dbReference>
<dbReference type="Gene3D" id="3.30.160.60">
    <property type="entry name" value="Classic Zinc Finger"/>
    <property type="match status" value="8"/>
</dbReference>
<dbReference type="Gene3D" id="3.30.710.10">
    <property type="entry name" value="Potassium Channel Kv1.1, Chain A"/>
    <property type="match status" value="1"/>
</dbReference>
<dbReference type="InterPro" id="IPR000210">
    <property type="entry name" value="BTB/POZ_dom"/>
</dbReference>
<dbReference type="InterPro" id="IPR011333">
    <property type="entry name" value="SKP1/BTB/POZ_sf"/>
</dbReference>
<dbReference type="InterPro" id="IPR036236">
    <property type="entry name" value="Znf_C2H2_sf"/>
</dbReference>
<dbReference type="InterPro" id="IPR013087">
    <property type="entry name" value="Znf_C2H2_type"/>
</dbReference>
<dbReference type="PANTHER" id="PTHR24394:SF59">
    <property type="entry name" value="ZINC FINGER AND BTB DOMAIN-CONTAINING PROTEIN 24 ISOFORM X1"/>
    <property type="match status" value="1"/>
</dbReference>
<dbReference type="PANTHER" id="PTHR24394">
    <property type="entry name" value="ZINC FINGER PROTEIN"/>
    <property type="match status" value="1"/>
</dbReference>
<dbReference type="Pfam" id="PF00651">
    <property type="entry name" value="BTB"/>
    <property type="match status" value="1"/>
</dbReference>
<dbReference type="Pfam" id="PF00096">
    <property type="entry name" value="zf-C2H2"/>
    <property type="match status" value="7"/>
</dbReference>
<dbReference type="SMART" id="SM00225">
    <property type="entry name" value="BTB"/>
    <property type="match status" value="1"/>
</dbReference>
<dbReference type="SMART" id="SM00355">
    <property type="entry name" value="ZnF_C2H2"/>
    <property type="match status" value="8"/>
</dbReference>
<dbReference type="SUPFAM" id="SSF57667">
    <property type="entry name" value="beta-beta-alpha zinc fingers"/>
    <property type="match status" value="4"/>
</dbReference>
<dbReference type="SUPFAM" id="SSF54695">
    <property type="entry name" value="POZ domain"/>
    <property type="match status" value="1"/>
</dbReference>
<dbReference type="PROSITE" id="PS50097">
    <property type="entry name" value="BTB"/>
    <property type="match status" value="1"/>
</dbReference>
<dbReference type="PROSITE" id="PS00028">
    <property type="entry name" value="ZINC_FINGER_C2H2_1"/>
    <property type="match status" value="8"/>
</dbReference>
<dbReference type="PROSITE" id="PS50157">
    <property type="entry name" value="ZINC_FINGER_C2H2_2"/>
    <property type="match status" value="8"/>
</dbReference>
<comment type="function">
    <text>May be involved in BMP2-induced transcription.</text>
</comment>
<comment type="subunit">
    <text evidence="1">Interacts with MN1.</text>
</comment>
<comment type="subcellular location">
    <subcellularLocation>
        <location evidence="8">Nucleus</location>
    </subcellularLocation>
</comment>
<comment type="alternative products">
    <event type="alternative splicing"/>
    <isoform>
        <id>Q80X44-1</id>
        <name>1</name>
        <sequence type="displayed"/>
    </isoform>
    <isoform>
        <id>Q80X44-2</id>
        <name>2</name>
        <sequence type="described" ref="VSP_016225"/>
    </isoform>
    <isoform>
        <id>Q80X44-3</id>
        <name>3</name>
        <sequence type="described" ref="VSP_016223 VSP_016224"/>
    </isoform>
</comment>
<comment type="tissue specificity">
    <text evidence="5">Widely expressed. Highest level in liver, testis and kidney.</text>
</comment>
<comment type="induction">
    <text evidence="5">By BMP2 in fibroblast, myoblast and preosteoblast cell lines.</text>
</comment>
<comment type="similarity">
    <text evidence="8">Belongs to the krueppel C2H2-type zinc-finger protein family.</text>
</comment>
<organism>
    <name type="scientific">Mus musculus</name>
    <name type="common">Mouse</name>
    <dbReference type="NCBI Taxonomy" id="10090"/>
    <lineage>
        <taxon>Eukaryota</taxon>
        <taxon>Metazoa</taxon>
        <taxon>Chordata</taxon>
        <taxon>Craniata</taxon>
        <taxon>Vertebrata</taxon>
        <taxon>Euteleostomi</taxon>
        <taxon>Mammalia</taxon>
        <taxon>Eutheria</taxon>
        <taxon>Euarchontoglires</taxon>
        <taxon>Glires</taxon>
        <taxon>Rodentia</taxon>
        <taxon>Myomorpha</taxon>
        <taxon>Muroidea</taxon>
        <taxon>Muridae</taxon>
        <taxon>Murinae</taxon>
        <taxon>Mus</taxon>
        <taxon>Mus</taxon>
    </lineage>
</organism>
<feature type="chain" id="PRO_0000047735" description="Zinc finger and BTB domain-containing protein 24">
    <location>
        <begin position="1"/>
        <end position="710"/>
    </location>
</feature>
<feature type="domain" description="BTB" evidence="2">
    <location>
        <begin position="37"/>
        <end position="103"/>
    </location>
</feature>
<feature type="DNA-binding region" description="A.T hook">
    <location>
        <begin position="159"/>
        <end position="171"/>
    </location>
</feature>
<feature type="zinc finger region" description="C2H2-type 1" evidence="3">
    <location>
        <begin position="293"/>
        <end position="315"/>
    </location>
</feature>
<feature type="zinc finger region" description="C2H2-type 2" evidence="3">
    <location>
        <begin position="321"/>
        <end position="343"/>
    </location>
</feature>
<feature type="zinc finger region" description="C2H2-type 3" evidence="3">
    <location>
        <begin position="349"/>
        <end position="371"/>
    </location>
</feature>
<feature type="zinc finger region" description="C2H2-type 4" evidence="3">
    <location>
        <begin position="377"/>
        <end position="399"/>
    </location>
</feature>
<feature type="zinc finger region" description="C2H2-type 5" evidence="3">
    <location>
        <begin position="405"/>
        <end position="427"/>
    </location>
</feature>
<feature type="zinc finger region" description="C2H2-type 6" evidence="3">
    <location>
        <begin position="433"/>
        <end position="455"/>
    </location>
</feature>
<feature type="zinc finger region" description="C2H2-type 7" evidence="3">
    <location>
        <begin position="461"/>
        <end position="483"/>
    </location>
</feature>
<feature type="zinc finger region" description="C2H2-type 8" evidence="3">
    <location>
        <begin position="489"/>
        <end position="511"/>
    </location>
</feature>
<feature type="region of interest" description="Disordered" evidence="4">
    <location>
        <begin position="134"/>
        <end position="176"/>
    </location>
</feature>
<feature type="region of interest" description="Disordered" evidence="4">
    <location>
        <begin position="202"/>
        <end position="256"/>
    </location>
</feature>
<feature type="region of interest" description="Disordered" evidence="4">
    <location>
        <begin position="651"/>
        <end position="676"/>
    </location>
</feature>
<feature type="compositionally biased region" description="Basic and acidic residues" evidence="4">
    <location>
        <begin position="202"/>
        <end position="219"/>
    </location>
</feature>
<feature type="compositionally biased region" description="Basic and acidic residues" evidence="4">
    <location>
        <begin position="231"/>
        <end position="244"/>
    </location>
</feature>
<feature type="splice variant" id="VSP_016223" description="In isoform 3." evidence="7">
    <original>ERPFKCNECGKGFAQKHSLQVHTRMHTGERPYTCTVC</original>
    <variation>NFDFQTWCDWLGSLELWLGRLCCFYMVDMAIKPSCCV</variation>
    <location>
        <begin position="318"/>
        <end position="354"/>
    </location>
</feature>
<feature type="splice variant" id="VSP_016224" description="In isoform 3." evidence="7">
    <location>
        <begin position="355"/>
        <end position="710"/>
    </location>
</feature>
<feature type="splice variant" id="VSP_016225" description="In isoform 2." evidence="6">
    <original>HSLPECSHCHRKFMDVSQLKKHLRTHTGEKPFTCEICGKSFTAKSSLQTHIRI</original>
    <variation>TIPIRPLTTRMQPLPPKVYGRVPAEEAPADT</variation>
    <location>
        <begin position="402"/>
        <end position="454"/>
    </location>
</feature>
<feature type="turn" evidence="9">
    <location>
        <begin position="380"/>
        <end position="382"/>
    </location>
</feature>
<feature type="strand" evidence="9">
    <location>
        <begin position="385"/>
        <end position="388"/>
    </location>
</feature>
<feature type="helix" evidence="9">
    <location>
        <begin position="389"/>
        <end position="395"/>
    </location>
</feature>
<feature type="helix" evidence="9">
    <location>
        <begin position="397"/>
        <end position="400"/>
    </location>
</feature>
<feature type="turn" evidence="9">
    <location>
        <begin position="408"/>
        <end position="410"/>
    </location>
</feature>
<feature type="helix" evidence="9">
    <location>
        <begin position="417"/>
        <end position="428"/>
    </location>
</feature>
<feature type="turn" evidence="9">
    <location>
        <begin position="436"/>
        <end position="438"/>
    </location>
</feature>
<feature type="strand" evidence="9">
    <location>
        <begin position="441"/>
        <end position="444"/>
    </location>
</feature>
<feature type="helix" evidence="9">
    <location>
        <begin position="445"/>
        <end position="455"/>
    </location>
</feature>
<feature type="turn" evidence="9">
    <location>
        <begin position="464"/>
        <end position="466"/>
    </location>
</feature>
<feature type="strand" evidence="9">
    <location>
        <begin position="469"/>
        <end position="472"/>
    </location>
</feature>
<feature type="helix" evidence="9">
    <location>
        <begin position="473"/>
        <end position="480"/>
    </location>
</feature>
<feature type="helix" evidence="9">
    <location>
        <begin position="481"/>
        <end position="484"/>
    </location>
</feature>
<feature type="turn" evidence="9">
    <location>
        <begin position="492"/>
        <end position="494"/>
    </location>
</feature>
<feature type="strand" evidence="9">
    <location>
        <begin position="497"/>
        <end position="499"/>
    </location>
</feature>
<feature type="helix" evidence="9">
    <location>
        <begin position="501"/>
        <end position="514"/>
    </location>
</feature>
<protein>
    <recommendedName>
        <fullName>Zinc finger and BTB domain-containing protein 24</fullName>
    </recommendedName>
    <alternativeName>
        <fullName>Bone morphogenetic protein-induced factor 1</fullName>
    </alternativeName>
    <alternativeName>
        <fullName>Brain-specific protein 1</fullName>
    </alternativeName>
    <alternativeName>
        <fullName>Zinc finger protein 450</fullName>
    </alternativeName>
</protein>
<name>ZBT24_MOUSE</name>